<dbReference type="EC" id="4.2.1.33" evidence="1"/>
<dbReference type="EMBL" id="AP009178">
    <property type="protein sequence ID" value="BAF70775.1"/>
    <property type="molecule type" value="Genomic_DNA"/>
</dbReference>
<dbReference type="RefSeq" id="WP_012083038.1">
    <property type="nucleotide sequence ID" value="NC_009662.1"/>
</dbReference>
<dbReference type="SMR" id="A6Q5L6"/>
<dbReference type="FunCoup" id="A6Q5L6">
    <property type="interactions" value="437"/>
</dbReference>
<dbReference type="STRING" id="387092.NIS_1669"/>
<dbReference type="KEGG" id="nis:NIS_1669"/>
<dbReference type="eggNOG" id="COG0065">
    <property type="taxonomic scope" value="Bacteria"/>
</dbReference>
<dbReference type="HOGENOM" id="CLU_006714_3_4_7"/>
<dbReference type="InParanoid" id="A6Q5L6"/>
<dbReference type="OrthoDB" id="9764318at2"/>
<dbReference type="UniPathway" id="UPA00048">
    <property type="reaction ID" value="UER00071"/>
</dbReference>
<dbReference type="Proteomes" id="UP000001118">
    <property type="component" value="Chromosome"/>
</dbReference>
<dbReference type="GO" id="GO:0003861">
    <property type="term" value="F:3-isopropylmalate dehydratase activity"/>
    <property type="evidence" value="ECO:0007669"/>
    <property type="project" value="UniProtKB-UniRule"/>
</dbReference>
<dbReference type="GO" id="GO:0051539">
    <property type="term" value="F:4 iron, 4 sulfur cluster binding"/>
    <property type="evidence" value="ECO:0007669"/>
    <property type="project" value="UniProtKB-KW"/>
</dbReference>
<dbReference type="GO" id="GO:0046872">
    <property type="term" value="F:metal ion binding"/>
    <property type="evidence" value="ECO:0007669"/>
    <property type="project" value="UniProtKB-KW"/>
</dbReference>
<dbReference type="GO" id="GO:0009098">
    <property type="term" value="P:L-leucine biosynthetic process"/>
    <property type="evidence" value="ECO:0007669"/>
    <property type="project" value="UniProtKB-UniRule"/>
</dbReference>
<dbReference type="CDD" id="cd01583">
    <property type="entry name" value="IPMI"/>
    <property type="match status" value="1"/>
</dbReference>
<dbReference type="Gene3D" id="3.30.499.10">
    <property type="entry name" value="Aconitase, domain 3"/>
    <property type="match status" value="2"/>
</dbReference>
<dbReference type="HAMAP" id="MF_01027">
    <property type="entry name" value="LeuC_type2"/>
    <property type="match status" value="1"/>
</dbReference>
<dbReference type="InterPro" id="IPR015931">
    <property type="entry name" value="Acnase/IPM_dHydase_lsu_aba_1/3"/>
</dbReference>
<dbReference type="InterPro" id="IPR001030">
    <property type="entry name" value="Acoase/IPM_deHydtase_lsu_aba"/>
</dbReference>
<dbReference type="InterPro" id="IPR018136">
    <property type="entry name" value="Aconitase_4Fe-4S_BS"/>
</dbReference>
<dbReference type="InterPro" id="IPR036008">
    <property type="entry name" value="Aconitase_4Fe-4S_dom"/>
</dbReference>
<dbReference type="InterPro" id="IPR011826">
    <property type="entry name" value="HAcnase/IPMdehydase_lsu_prok"/>
</dbReference>
<dbReference type="InterPro" id="IPR006251">
    <property type="entry name" value="Homoacnase/IPMdehydase_lsu"/>
</dbReference>
<dbReference type="InterPro" id="IPR050067">
    <property type="entry name" value="IPM_dehydratase_rel_enz"/>
</dbReference>
<dbReference type="InterPro" id="IPR033941">
    <property type="entry name" value="IPMI_cat"/>
</dbReference>
<dbReference type="InterPro" id="IPR011823">
    <property type="entry name" value="IsopropMal_deHydtase_lsu_bac"/>
</dbReference>
<dbReference type="NCBIfam" id="TIGR01343">
    <property type="entry name" value="hacA_fam"/>
    <property type="match status" value="1"/>
</dbReference>
<dbReference type="NCBIfam" id="TIGR02086">
    <property type="entry name" value="IPMI_arch"/>
    <property type="match status" value="1"/>
</dbReference>
<dbReference type="NCBIfam" id="TIGR02083">
    <property type="entry name" value="LEU2"/>
    <property type="match status" value="1"/>
</dbReference>
<dbReference type="NCBIfam" id="NF001614">
    <property type="entry name" value="PRK00402.1"/>
    <property type="match status" value="1"/>
</dbReference>
<dbReference type="PANTHER" id="PTHR43822:SF16">
    <property type="entry name" value="3-ISOPROPYLMALATE DEHYDRATASE LARGE SUBUNIT 2"/>
    <property type="match status" value="1"/>
</dbReference>
<dbReference type="PANTHER" id="PTHR43822">
    <property type="entry name" value="HOMOACONITASE, MITOCHONDRIAL-RELATED"/>
    <property type="match status" value="1"/>
</dbReference>
<dbReference type="Pfam" id="PF00330">
    <property type="entry name" value="Aconitase"/>
    <property type="match status" value="1"/>
</dbReference>
<dbReference type="PRINTS" id="PR00415">
    <property type="entry name" value="ACONITASE"/>
</dbReference>
<dbReference type="SUPFAM" id="SSF53732">
    <property type="entry name" value="Aconitase iron-sulfur domain"/>
    <property type="match status" value="1"/>
</dbReference>
<dbReference type="PROSITE" id="PS00450">
    <property type="entry name" value="ACONITASE_1"/>
    <property type="match status" value="1"/>
</dbReference>
<dbReference type="PROSITE" id="PS01244">
    <property type="entry name" value="ACONITASE_2"/>
    <property type="match status" value="1"/>
</dbReference>
<name>LEUC_NITSB</name>
<gene>
    <name evidence="1" type="primary">leuC</name>
    <name type="ordered locus">NIS_1669</name>
</gene>
<evidence type="ECO:0000255" key="1">
    <source>
        <dbReference type="HAMAP-Rule" id="MF_01027"/>
    </source>
</evidence>
<protein>
    <recommendedName>
        <fullName evidence="1">3-isopropylmalate dehydratase large subunit</fullName>
        <ecNumber evidence="1">4.2.1.33</ecNumber>
    </recommendedName>
    <alternativeName>
        <fullName evidence="1">Alpha-IPM isomerase</fullName>
        <shortName evidence="1">IPMI</shortName>
    </alternativeName>
    <alternativeName>
        <fullName evidence="1">Isopropylmalate isomerase</fullName>
    </alternativeName>
</protein>
<keyword id="KW-0004">4Fe-4S</keyword>
<keyword id="KW-0028">Amino-acid biosynthesis</keyword>
<keyword id="KW-0100">Branched-chain amino acid biosynthesis</keyword>
<keyword id="KW-0408">Iron</keyword>
<keyword id="KW-0411">Iron-sulfur</keyword>
<keyword id="KW-0432">Leucine biosynthesis</keyword>
<keyword id="KW-0456">Lyase</keyword>
<keyword id="KW-0479">Metal-binding</keyword>
<keyword id="KW-1185">Reference proteome</keyword>
<organism>
    <name type="scientific">Nitratiruptor sp. (strain SB155-2)</name>
    <dbReference type="NCBI Taxonomy" id="387092"/>
    <lineage>
        <taxon>Bacteria</taxon>
        <taxon>Pseudomonadati</taxon>
        <taxon>Campylobacterota</taxon>
        <taxon>Epsilonproteobacteria</taxon>
        <taxon>Nautiliales</taxon>
        <taxon>Nitratiruptoraceae</taxon>
        <taxon>Nitratiruptor</taxon>
    </lineage>
</organism>
<feature type="chain" id="PRO_1000063651" description="3-isopropylmalate dehydratase large subunit">
    <location>
        <begin position="1"/>
        <end position="421"/>
    </location>
</feature>
<feature type="binding site" evidence="1">
    <location>
        <position position="302"/>
    </location>
    <ligand>
        <name>[4Fe-4S] cluster</name>
        <dbReference type="ChEBI" id="CHEBI:49883"/>
    </ligand>
</feature>
<feature type="binding site" evidence="1">
    <location>
        <position position="362"/>
    </location>
    <ligand>
        <name>[4Fe-4S] cluster</name>
        <dbReference type="ChEBI" id="CHEBI:49883"/>
    </ligand>
</feature>
<feature type="binding site" evidence="1">
    <location>
        <position position="365"/>
    </location>
    <ligand>
        <name>[4Fe-4S] cluster</name>
        <dbReference type="ChEBI" id="CHEBI:49883"/>
    </ligand>
</feature>
<accession>A6Q5L6</accession>
<comment type="function">
    <text evidence="1">Catalyzes the isomerization between 2-isopropylmalate and 3-isopropylmalate, via the formation of 2-isopropylmaleate.</text>
</comment>
<comment type="catalytic activity">
    <reaction evidence="1">
        <text>(2R,3S)-3-isopropylmalate = (2S)-2-isopropylmalate</text>
        <dbReference type="Rhea" id="RHEA:32287"/>
        <dbReference type="ChEBI" id="CHEBI:1178"/>
        <dbReference type="ChEBI" id="CHEBI:35121"/>
        <dbReference type="EC" id="4.2.1.33"/>
    </reaction>
</comment>
<comment type="cofactor">
    <cofactor evidence="1">
        <name>[4Fe-4S] cluster</name>
        <dbReference type="ChEBI" id="CHEBI:49883"/>
    </cofactor>
    <text evidence="1">Binds 1 [4Fe-4S] cluster per subunit.</text>
</comment>
<comment type="pathway">
    <text evidence="1">Amino-acid biosynthesis; L-leucine biosynthesis; L-leucine from 3-methyl-2-oxobutanoate: step 2/4.</text>
</comment>
<comment type="subunit">
    <text evidence="1">Heterodimer of LeuC and LeuD.</text>
</comment>
<comment type="similarity">
    <text evidence="1">Belongs to the aconitase/IPM isomerase family. LeuC type 2 subfamily.</text>
</comment>
<proteinExistence type="inferred from homology"/>
<sequence>MGQTITEKIFSEHVGREVKAGEIVECELDMIIGNDITTPISIKAFRDSGAKKLAKPDNFAIVLDHFIPAKDIASANQAKISREFAYEHNLKHFFDEKDMGIEHALLPEKGLVVPGDVIIGADSHTCTHGALGAFATGMGSTDLAYGMITGKNWFKVPPSIKVIYTGKLGEHVYGKDLILELIRRIGVDGALYKALEFTGDTIENLDMDGRFSLCNMAIEAGAKNGIIAVDEVTKAFLADKPLAREPKIHYSDEDAEYEQVIEIDVNNLEPVIAFPHLPSNGRPISEAAKMDLKVDQVFIGSCTNGRLSDIAIAAEILKGRKVARHTRMIVTPATQKILKEAEKRGYIDILIDAGAVVSNPTCGACLGGYMGILADNERCVSTTNRNFVGRMGARTSEIYLANSAVAAASAVAGKIADPREL</sequence>
<reference key="1">
    <citation type="journal article" date="2007" name="Proc. Natl. Acad. Sci. U.S.A.">
        <title>Deep-sea vent epsilon-proteobacterial genomes provide insights into emergence of pathogens.</title>
        <authorList>
            <person name="Nakagawa S."/>
            <person name="Takaki Y."/>
            <person name="Shimamura S."/>
            <person name="Reysenbach A.-L."/>
            <person name="Takai K."/>
            <person name="Horikoshi K."/>
        </authorList>
    </citation>
    <scope>NUCLEOTIDE SEQUENCE [LARGE SCALE GENOMIC DNA]</scope>
    <source>
        <strain>SB155-2</strain>
    </source>
</reference>